<name>RS13_BRASB</name>
<reference key="1">
    <citation type="journal article" date="2007" name="Science">
        <title>Legumes symbioses: absence of nod genes in photosynthetic bradyrhizobia.</title>
        <authorList>
            <person name="Giraud E."/>
            <person name="Moulin L."/>
            <person name="Vallenet D."/>
            <person name="Barbe V."/>
            <person name="Cytryn E."/>
            <person name="Avarre J.-C."/>
            <person name="Jaubert M."/>
            <person name="Simon D."/>
            <person name="Cartieaux F."/>
            <person name="Prin Y."/>
            <person name="Bena G."/>
            <person name="Hannibal L."/>
            <person name="Fardoux J."/>
            <person name="Kojadinovic M."/>
            <person name="Vuillet L."/>
            <person name="Lajus A."/>
            <person name="Cruveiller S."/>
            <person name="Rouy Z."/>
            <person name="Mangenot S."/>
            <person name="Segurens B."/>
            <person name="Dossat C."/>
            <person name="Franck W.L."/>
            <person name="Chang W.-S."/>
            <person name="Saunders E."/>
            <person name="Bruce D."/>
            <person name="Richardson P."/>
            <person name="Normand P."/>
            <person name="Dreyfus B."/>
            <person name="Pignol D."/>
            <person name="Stacey G."/>
            <person name="Emerich D."/>
            <person name="Vermeglio A."/>
            <person name="Medigue C."/>
            <person name="Sadowsky M."/>
        </authorList>
    </citation>
    <scope>NUCLEOTIDE SEQUENCE [LARGE SCALE GENOMIC DNA]</scope>
    <source>
        <strain>BTAi1 / ATCC BAA-1182</strain>
    </source>
</reference>
<feature type="chain" id="PRO_0000306571" description="Small ribosomal subunit protein uS13">
    <location>
        <begin position="1"/>
        <end position="122"/>
    </location>
</feature>
<feature type="region of interest" description="Disordered" evidence="2">
    <location>
        <begin position="99"/>
        <end position="122"/>
    </location>
</feature>
<dbReference type="EMBL" id="CP000494">
    <property type="protein sequence ID" value="ABQ37049.1"/>
    <property type="molecule type" value="Genomic_DNA"/>
</dbReference>
<dbReference type="RefSeq" id="WP_012045030.1">
    <property type="nucleotide sequence ID" value="NC_009485.1"/>
</dbReference>
<dbReference type="SMR" id="A5ELK5"/>
<dbReference type="STRING" id="288000.BBta_5048"/>
<dbReference type="KEGG" id="bbt:BBta_5048"/>
<dbReference type="eggNOG" id="COG0099">
    <property type="taxonomic scope" value="Bacteria"/>
</dbReference>
<dbReference type="HOGENOM" id="CLU_103849_1_2_5"/>
<dbReference type="OrthoDB" id="9803610at2"/>
<dbReference type="Proteomes" id="UP000000246">
    <property type="component" value="Chromosome"/>
</dbReference>
<dbReference type="GO" id="GO:0005829">
    <property type="term" value="C:cytosol"/>
    <property type="evidence" value="ECO:0007669"/>
    <property type="project" value="TreeGrafter"/>
</dbReference>
<dbReference type="GO" id="GO:0015935">
    <property type="term" value="C:small ribosomal subunit"/>
    <property type="evidence" value="ECO:0007669"/>
    <property type="project" value="TreeGrafter"/>
</dbReference>
<dbReference type="GO" id="GO:0019843">
    <property type="term" value="F:rRNA binding"/>
    <property type="evidence" value="ECO:0007669"/>
    <property type="project" value="UniProtKB-UniRule"/>
</dbReference>
<dbReference type="GO" id="GO:0003735">
    <property type="term" value="F:structural constituent of ribosome"/>
    <property type="evidence" value="ECO:0007669"/>
    <property type="project" value="InterPro"/>
</dbReference>
<dbReference type="GO" id="GO:0000049">
    <property type="term" value="F:tRNA binding"/>
    <property type="evidence" value="ECO:0007669"/>
    <property type="project" value="UniProtKB-UniRule"/>
</dbReference>
<dbReference type="GO" id="GO:0006412">
    <property type="term" value="P:translation"/>
    <property type="evidence" value="ECO:0007669"/>
    <property type="project" value="UniProtKB-UniRule"/>
</dbReference>
<dbReference type="FunFam" id="1.10.8.50:FF:000001">
    <property type="entry name" value="30S ribosomal protein S13"/>
    <property type="match status" value="1"/>
</dbReference>
<dbReference type="FunFam" id="4.10.910.10:FF:000001">
    <property type="entry name" value="30S ribosomal protein S13"/>
    <property type="match status" value="1"/>
</dbReference>
<dbReference type="Gene3D" id="1.10.8.50">
    <property type="match status" value="1"/>
</dbReference>
<dbReference type="Gene3D" id="4.10.910.10">
    <property type="entry name" value="30s ribosomal protein s13, domain 2"/>
    <property type="match status" value="1"/>
</dbReference>
<dbReference type="HAMAP" id="MF_01315">
    <property type="entry name" value="Ribosomal_uS13"/>
    <property type="match status" value="1"/>
</dbReference>
<dbReference type="InterPro" id="IPR027437">
    <property type="entry name" value="Rbsml_uS13_C"/>
</dbReference>
<dbReference type="InterPro" id="IPR001892">
    <property type="entry name" value="Ribosomal_uS13"/>
</dbReference>
<dbReference type="InterPro" id="IPR010979">
    <property type="entry name" value="Ribosomal_uS13-like_H2TH"/>
</dbReference>
<dbReference type="InterPro" id="IPR019980">
    <property type="entry name" value="Ribosomal_uS13_bac-type"/>
</dbReference>
<dbReference type="InterPro" id="IPR018269">
    <property type="entry name" value="Ribosomal_uS13_CS"/>
</dbReference>
<dbReference type="NCBIfam" id="TIGR03631">
    <property type="entry name" value="uS13_bact"/>
    <property type="match status" value="1"/>
</dbReference>
<dbReference type="PANTHER" id="PTHR10871">
    <property type="entry name" value="30S RIBOSOMAL PROTEIN S13/40S RIBOSOMAL PROTEIN S18"/>
    <property type="match status" value="1"/>
</dbReference>
<dbReference type="PANTHER" id="PTHR10871:SF1">
    <property type="entry name" value="SMALL RIBOSOMAL SUBUNIT PROTEIN US13M"/>
    <property type="match status" value="1"/>
</dbReference>
<dbReference type="Pfam" id="PF00416">
    <property type="entry name" value="Ribosomal_S13"/>
    <property type="match status" value="1"/>
</dbReference>
<dbReference type="PIRSF" id="PIRSF002134">
    <property type="entry name" value="Ribosomal_S13"/>
    <property type="match status" value="1"/>
</dbReference>
<dbReference type="SUPFAM" id="SSF46946">
    <property type="entry name" value="S13-like H2TH domain"/>
    <property type="match status" value="1"/>
</dbReference>
<dbReference type="PROSITE" id="PS00646">
    <property type="entry name" value="RIBOSOMAL_S13_1"/>
    <property type="match status" value="1"/>
</dbReference>
<dbReference type="PROSITE" id="PS50159">
    <property type="entry name" value="RIBOSOMAL_S13_2"/>
    <property type="match status" value="1"/>
</dbReference>
<organism>
    <name type="scientific">Bradyrhizobium sp. (strain BTAi1 / ATCC BAA-1182)</name>
    <dbReference type="NCBI Taxonomy" id="288000"/>
    <lineage>
        <taxon>Bacteria</taxon>
        <taxon>Pseudomonadati</taxon>
        <taxon>Pseudomonadota</taxon>
        <taxon>Alphaproteobacteria</taxon>
        <taxon>Hyphomicrobiales</taxon>
        <taxon>Nitrobacteraceae</taxon>
        <taxon>Bradyrhizobium</taxon>
    </lineage>
</organism>
<comment type="function">
    <text evidence="1">Located at the top of the head of the 30S subunit, it contacts several helices of the 16S rRNA. In the 70S ribosome it contacts the 23S rRNA (bridge B1a) and protein L5 of the 50S subunit (bridge B1b), connecting the 2 subunits; these bridges are implicated in subunit movement. Contacts the tRNAs in the A and P-sites.</text>
</comment>
<comment type="subunit">
    <text evidence="1">Part of the 30S ribosomal subunit. Forms a loose heterodimer with protein S19. Forms two bridges to the 50S subunit in the 70S ribosome.</text>
</comment>
<comment type="similarity">
    <text evidence="1">Belongs to the universal ribosomal protein uS13 family.</text>
</comment>
<protein>
    <recommendedName>
        <fullName evidence="1">Small ribosomal subunit protein uS13</fullName>
    </recommendedName>
    <alternativeName>
        <fullName evidence="3">30S ribosomal protein S13</fullName>
    </alternativeName>
</protein>
<proteinExistence type="inferred from homology"/>
<evidence type="ECO:0000255" key="1">
    <source>
        <dbReference type="HAMAP-Rule" id="MF_01315"/>
    </source>
</evidence>
<evidence type="ECO:0000256" key="2">
    <source>
        <dbReference type="SAM" id="MobiDB-lite"/>
    </source>
</evidence>
<evidence type="ECO:0000305" key="3"/>
<sequence>MARIAGVNIPTNKRVLIALQYIHGIGPKIASEIIEKVKIAEDRRVNQLSDQEVLQIREIIDRDYVVEGDLRRETGINIKRLMDLGCYRGLRHRRGLPVRGQRTHTNARTRKGPAKAIAGKKK</sequence>
<accession>A5ELK5</accession>
<keyword id="KW-1185">Reference proteome</keyword>
<keyword id="KW-0687">Ribonucleoprotein</keyword>
<keyword id="KW-0689">Ribosomal protein</keyword>
<keyword id="KW-0694">RNA-binding</keyword>
<keyword id="KW-0699">rRNA-binding</keyword>
<keyword id="KW-0820">tRNA-binding</keyword>
<gene>
    <name evidence="1" type="primary">rpsM</name>
    <name type="ordered locus">BBta_5048</name>
</gene>